<sequence>MSVSQELFDRARRVMPGGVNSPVRAFNSVGGTPPFIAAAKGPYLTDVDGREYVDLVCSWGPALIGHAHPVVTEAVHEAVERGLGFGATTRGETELAELVVDRVAPLEEIRMVSTGTEATMTALRLARGYTGRDLVVKFAGCYHGHVDSLLSEAGSGLATLALPGSAGVTEATAAQTLVLPYNDVAALEAAFAEHPGRIAAVITEAAPCNMGVVTPQDGFNAAIRRITQADGALMILDEVLTGFRVHEAGYWGLSNAAGESWAPDLFTFGKVIGGGLPTAALGGRREVMEYLAPTGPVYQAGTLSGNPVAMAAGLATLKCADAVAYQTIDRRSEQLRAGLREALDAAGVDYSIQEVGSLFSLAFGTRSTGVHDYADAKGQEAFRYTPFFHAMLDAGVYLPPSVFEAWFLSAAHDDSAMDRILSALPAAARAAAEAQPPQP</sequence>
<evidence type="ECO:0000255" key="1">
    <source>
        <dbReference type="HAMAP-Rule" id="MF_00375"/>
    </source>
</evidence>
<reference key="1">
    <citation type="journal article" date="2008" name="J. Bacteriol.">
        <title>Complete genome sequence of the soil actinomycete Kocuria rhizophila.</title>
        <authorList>
            <person name="Takarada H."/>
            <person name="Sekine M."/>
            <person name="Kosugi H."/>
            <person name="Matsuo Y."/>
            <person name="Fujisawa T."/>
            <person name="Omata S."/>
            <person name="Kishi E."/>
            <person name="Shimizu A."/>
            <person name="Tsukatani N."/>
            <person name="Tanikawa S."/>
            <person name="Fujita N."/>
            <person name="Harayama S."/>
        </authorList>
    </citation>
    <scope>NUCLEOTIDE SEQUENCE [LARGE SCALE GENOMIC DNA]</scope>
    <source>
        <strain>ATCC 9341 / DSM 348 / NBRC 103217 / DC2201</strain>
    </source>
</reference>
<name>GSA_KOCRD</name>
<accession>B2GL27</accession>
<dbReference type="EC" id="5.4.3.8" evidence="1"/>
<dbReference type="EMBL" id="AP009152">
    <property type="protein sequence ID" value="BAG29203.1"/>
    <property type="molecule type" value="Genomic_DNA"/>
</dbReference>
<dbReference type="RefSeq" id="WP_012397924.1">
    <property type="nucleotide sequence ID" value="NC_010617.1"/>
</dbReference>
<dbReference type="SMR" id="B2GL27"/>
<dbReference type="STRING" id="378753.KRH_08560"/>
<dbReference type="KEGG" id="krh:KRH_08560"/>
<dbReference type="eggNOG" id="COG0001">
    <property type="taxonomic scope" value="Bacteria"/>
</dbReference>
<dbReference type="HOGENOM" id="CLU_016922_1_5_11"/>
<dbReference type="OrthoDB" id="9801052at2"/>
<dbReference type="UniPathway" id="UPA00251">
    <property type="reaction ID" value="UER00317"/>
</dbReference>
<dbReference type="Proteomes" id="UP000008838">
    <property type="component" value="Chromosome"/>
</dbReference>
<dbReference type="GO" id="GO:0005737">
    <property type="term" value="C:cytoplasm"/>
    <property type="evidence" value="ECO:0007669"/>
    <property type="project" value="UniProtKB-SubCell"/>
</dbReference>
<dbReference type="GO" id="GO:0042286">
    <property type="term" value="F:glutamate-1-semialdehyde 2,1-aminomutase activity"/>
    <property type="evidence" value="ECO:0007669"/>
    <property type="project" value="UniProtKB-UniRule"/>
</dbReference>
<dbReference type="GO" id="GO:0030170">
    <property type="term" value="F:pyridoxal phosphate binding"/>
    <property type="evidence" value="ECO:0007669"/>
    <property type="project" value="InterPro"/>
</dbReference>
<dbReference type="GO" id="GO:0008483">
    <property type="term" value="F:transaminase activity"/>
    <property type="evidence" value="ECO:0007669"/>
    <property type="project" value="InterPro"/>
</dbReference>
<dbReference type="GO" id="GO:0006782">
    <property type="term" value="P:protoporphyrinogen IX biosynthetic process"/>
    <property type="evidence" value="ECO:0007669"/>
    <property type="project" value="UniProtKB-UniRule"/>
</dbReference>
<dbReference type="CDD" id="cd00610">
    <property type="entry name" value="OAT_like"/>
    <property type="match status" value="1"/>
</dbReference>
<dbReference type="FunFam" id="3.40.640.10:FF:000021">
    <property type="entry name" value="Glutamate-1-semialdehyde 2,1-aminomutase"/>
    <property type="match status" value="1"/>
</dbReference>
<dbReference type="Gene3D" id="3.90.1150.10">
    <property type="entry name" value="Aspartate Aminotransferase, domain 1"/>
    <property type="match status" value="1"/>
</dbReference>
<dbReference type="Gene3D" id="3.40.640.10">
    <property type="entry name" value="Type I PLP-dependent aspartate aminotransferase-like (Major domain)"/>
    <property type="match status" value="1"/>
</dbReference>
<dbReference type="HAMAP" id="MF_00375">
    <property type="entry name" value="HemL_aminotrans_3"/>
    <property type="match status" value="1"/>
</dbReference>
<dbReference type="InterPro" id="IPR004639">
    <property type="entry name" value="4pyrrol_synth_GluAld_NH2Trfase"/>
</dbReference>
<dbReference type="InterPro" id="IPR005814">
    <property type="entry name" value="Aminotrans_3"/>
</dbReference>
<dbReference type="InterPro" id="IPR015424">
    <property type="entry name" value="PyrdxlP-dep_Trfase"/>
</dbReference>
<dbReference type="InterPro" id="IPR015421">
    <property type="entry name" value="PyrdxlP-dep_Trfase_major"/>
</dbReference>
<dbReference type="InterPro" id="IPR015422">
    <property type="entry name" value="PyrdxlP-dep_Trfase_small"/>
</dbReference>
<dbReference type="NCBIfam" id="TIGR00713">
    <property type="entry name" value="hemL"/>
    <property type="match status" value="1"/>
</dbReference>
<dbReference type="NCBIfam" id="NF000818">
    <property type="entry name" value="PRK00062.1"/>
    <property type="match status" value="1"/>
</dbReference>
<dbReference type="PANTHER" id="PTHR43713">
    <property type="entry name" value="GLUTAMATE-1-SEMIALDEHYDE 2,1-AMINOMUTASE"/>
    <property type="match status" value="1"/>
</dbReference>
<dbReference type="PANTHER" id="PTHR43713:SF3">
    <property type="entry name" value="GLUTAMATE-1-SEMIALDEHYDE 2,1-AMINOMUTASE 1, CHLOROPLASTIC-RELATED"/>
    <property type="match status" value="1"/>
</dbReference>
<dbReference type="Pfam" id="PF00202">
    <property type="entry name" value="Aminotran_3"/>
    <property type="match status" value="1"/>
</dbReference>
<dbReference type="SUPFAM" id="SSF53383">
    <property type="entry name" value="PLP-dependent transferases"/>
    <property type="match status" value="1"/>
</dbReference>
<comment type="catalytic activity">
    <reaction evidence="1">
        <text>(S)-4-amino-5-oxopentanoate = 5-aminolevulinate</text>
        <dbReference type="Rhea" id="RHEA:14265"/>
        <dbReference type="ChEBI" id="CHEBI:57501"/>
        <dbReference type="ChEBI" id="CHEBI:356416"/>
        <dbReference type="EC" id="5.4.3.8"/>
    </reaction>
</comment>
<comment type="cofactor">
    <cofactor evidence="1">
        <name>pyridoxal 5'-phosphate</name>
        <dbReference type="ChEBI" id="CHEBI:597326"/>
    </cofactor>
</comment>
<comment type="pathway">
    <text evidence="1">Porphyrin-containing compound metabolism; protoporphyrin-IX biosynthesis; 5-aminolevulinate from L-glutamyl-tRNA(Glu): step 2/2.</text>
</comment>
<comment type="subunit">
    <text evidence="1">Homodimer.</text>
</comment>
<comment type="subcellular location">
    <subcellularLocation>
        <location evidence="1">Cytoplasm</location>
    </subcellularLocation>
</comment>
<comment type="similarity">
    <text evidence="1">Belongs to the class-III pyridoxal-phosphate-dependent aminotransferase family. HemL subfamily.</text>
</comment>
<keyword id="KW-0963">Cytoplasm</keyword>
<keyword id="KW-0413">Isomerase</keyword>
<keyword id="KW-0627">Porphyrin biosynthesis</keyword>
<keyword id="KW-0663">Pyridoxal phosphate</keyword>
<keyword id="KW-1185">Reference proteome</keyword>
<organism>
    <name type="scientific">Kocuria rhizophila (strain ATCC 9341 / DSM 348 / NBRC 103217 / DC2201)</name>
    <dbReference type="NCBI Taxonomy" id="378753"/>
    <lineage>
        <taxon>Bacteria</taxon>
        <taxon>Bacillati</taxon>
        <taxon>Actinomycetota</taxon>
        <taxon>Actinomycetes</taxon>
        <taxon>Micrococcales</taxon>
        <taxon>Micrococcaceae</taxon>
        <taxon>Kocuria</taxon>
    </lineage>
</organism>
<proteinExistence type="inferred from homology"/>
<protein>
    <recommendedName>
        <fullName evidence="1">Glutamate-1-semialdehyde 2,1-aminomutase</fullName>
        <shortName evidence="1">GSA</shortName>
        <ecNumber evidence="1">5.4.3.8</ecNumber>
    </recommendedName>
    <alternativeName>
        <fullName evidence="1">Glutamate-1-semialdehyde aminotransferase</fullName>
        <shortName evidence="1">GSA-AT</shortName>
    </alternativeName>
</protein>
<gene>
    <name evidence="1" type="primary">hemL</name>
    <name type="ordered locus">KRH_08560</name>
</gene>
<feature type="chain" id="PRO_1000121899" description="Glutamate-1-semialdehyde 2,1-aminomutase">
    <location>
        <begin position="1"/>
        <end position="439"/>
    </location>
</feature>
<feature type="modified residue" description="N6-(pyridoxal phosphate)lysine" evidence="1">
    <location>
        <position position="270"/>
    </location>
</feature>